<comment type="function">
    <text evidence="1">NQR complex catalyzes the reduction of ubiquinone-1 to ubiquinol by two successive reactions, coupled with the transport of Na(+) ions from the cytoplasm to the periplasm. NqrA to NqrE are probably involved in the second step, the conversion of ubisemiquinone to ubiquinol.</text>
</comment>
<comment type="catalytic activity">
    <reaction evidence="1">
        <text>a ubiquinone + n Na(+)(in) + NADH + H(+) = a ubiquinol + n Na(+)(out) + NAD(+)</text>
        <dbReference type="Rhea" id="RHEA:47748"/>
        <dbReference type="Rhea" id="RHEA-COMP:9565"/>
        <dbReference type="Rhea" id="RHEA-COMP:9566"/>
        <dbReference type="ChEBI" id="CHEBI:15378"/>
        <dbReference type="ChEBI" id="CHEBI:16389"/>
        <dbReference type="ChEBI" id="CHEBI:17976"/>
        <dbReference type="ChEBI" id="CHEBI:29101"/>
        <dbReference type="ChEBI" id="CHEBI:57540"/>
        <dbReference type="ChEBI" id="CHEBI:57945"/>
        <dbReference type="EC" id="7.2.1.1"/>
    </reaction>
</comment>
<comment type="subunit">
    <text evidence="1">Composed of six subunits; NqrA, NqrB, NqrC, NqrD, NqrE and NqrF.</text>
</comment>
<comment type="similarity">
    <text evidence="1">Belongs to the NqrA family.</text>
</comment>
<sequence>MITIKKGLDLPIAGTPSQVINDGKTIKKVALLGEEYVGMRPTMHVRVGDEVKKAQILFEDKKNPGVKFTAPAAGKVIEVNRGAKRVLQSVVIEVAGEEQVTFDKFEAAQLSGLDREVIKTQLVESGLWTALRTRPFSKVPAIESATKAIFVTAMDTNPLAAKPELIINEQQEAFIAGLDILSALTEGKVYVCKSGTSLPRSSQSNVEEHVFDGPHPAGLAGTHMHFLYPVNAENVAWSINYQDVIAFGKLFLTGELYTDRVISLAGPVVNNPRLVRTVMGASLDDLTDSELMPGEVRVISGSVLTGTHATGPHAYLGRYHQQVSVLREGREKELLGWAMPGKNKFSVTRSFLGHLFKGQLFNMTTSTNGSDRSMVPIGSYERVMPLDMEPTLLLRDLCAGDSDSAQALGALELDEEDLALCTFVCPGKYEYGQLLRECLDKIEKEG</sequence>
<proteinExistence type="inferred from homology"/>
<name>NQRA_VIBPA</name>
<reference key="1">
    <citation type="journal article" date="2003" name="Lancet">
        <title>Genome sequence of Vibrio parahaemolyticus: a pathogenic mechanism distinct from that of V. cholerae.</title>
        <authorList>
            <person name="Makino K."/>
            <person name="Oshima K."/>
            <person name="Kurokawa K."/>
            <person name="Yokoyama K."/>
            <person name="Uda T."/>
            <person name="Tagomori K."/>
            <person name="Iijima Y."/>
            <person name="Najima M."/>
            <person name="Nakano M."/>
            <person name="Yamashita A."/>
            <person name="Kubota Y."/>
            <person name="Kimura S."/>
            <person name="Yasunaga T."/>
            <person name="Honda T."/>
            <person name="Shinagawa H."/>
            <person name="Hattori M."/>
            <person name="Iida T."/>
        </authorList>
    </citation>
    <scope>NUCLEOTIDE SEQUENCE [LARGE SCALE GENOMIC DNA]</scope>
    <source>
        <strain>RIMD 2210633</strain>
    </source>
</reference>
<protein>
    <recommendedName>
        <fullName evidence="1">Na(+)-translocating NADH-quinone reductase subunit A</fullName>
        <shortName evidence="1">Na(+)-NQR subunit A</shortName>
        <shortName evidence="1">Na(+)-translocating NQR subunit A</shortName>
        <ecNumber evidence="1">7.2.1.1</ecNumber>
    </recommendedName>
    <alternativeName>
        <fullName evidence="1">NQR complex subunit A</fullName>
    </alternativeName>
    <alternativeName>
        <fullName evidence="1">NQR-1 subunit A</fullName>
    </alternativeName>
</protein>
<dbReference type="EC" id="7.2.1.1" evidence="1"/>
<dbReference type="EMBL" id="BA000031">
    <property type="protein sequence ID" value="BAC60614.1"/>
    <property type="molecule type" value="Genomic_DNA"/>
</dbReference>
<dbReference type="RefSeq" id="NP_798730.1">
    <property type="nucleotide sequence ID" value="NC_004603.1"/>
</dbReference>
<dbReference type="RefSeq" id="WP_005494215.1">
    <property type="nucleotide sequence ID" value="NC_004603.1"/>
</dbReference>
<dbReference type="SMR" id="Q87MA6"/>
<dbReference type="GeneID" id="1189864"/>
<dbReference type="KEGG" id="vpa:VP2351"/>
<dbReference type="PATRIC" id="fig|223926.6.peg.2254"/>
<dbReference type="eggNOG" id="COG1726">
    <property type="taxonomic scope" value="Bacteria"/>
</dbReference>
<dbReference type="HOGENOM" id="CLU_046656_0_0_6"/>
<dbReference type="Proteomes" id="UP000002493">
    <property type="component" value="Chromosome 1"/>
</dbReference>
<dbReference type="GO" id="GO:0016655">
    <property type="term" value="F:oxidoreductase activity, acting on NAD(P)H, quinone or similar compound as acceptor"/>
    <property type="evidence" value="ECO:0007669"/>
    <property type="project" value="UniProtKB-UniRule"/>
</dbReference>
<dbReference type="GO" id="GO:0006814">
    <property type="term" value="P:sodium ion transport"/>
    <property type="evidence" value="ECO:0007669"/>
    <property type="project" value="UniProtKB-UniRule"/>
</dbReference>
<dbReference type="HAMAP" id="MF_00425">
    <property type="entry name" value="NqrA"/>
    <property type="match status" value="1"/>
</dbReference>
<dbReference type="InterPro" id="IPR008703">
    <property type="entry name" value="NqrA"/>
</dbReference>
<dbReference type="InterPro" id="IPR056148">
    <property type="entry name" value="NQRA_2nd"/>
</dbReference>
<dbReference type="InterPro" id="IPR022615">
    <property type="entry name" value="NqrA_C_domain"/>
</dbReference>
<dbReference type="InterPro" id="IPR056147">
    <property type="entry name" value="NQRA_N"/>
</dbReference>
<dbReference type="NCBIfam" id="TIGR01936">
    <property type="entry name" value="nqrA"/>
    <property type="match status" value="1"/>
</dbReference>
<dbReference type="NCBIfam" id="NF003759">
    <property type="entry name" value="PRK05352.1-2"/>
    <property type="match status" value="1"/>
</dbReference>
<dbReference type="PANTHER" id="PTHR37839">
    <property type="entry name" value="NA(+)-TRANSLOCATING NADH-QUINONE REDUCTASE SUBUNIT A"/>
    <property type="match status" value="1"/>
</dbReference>
<dbReference type="PANTHER" id="PTHR37839:SF1">
    <property type="entry name" value="NA(+)-TRANSLOCATING NADH-QUINONE REDUCTASE SUBUNIT A"/>
    <property type="match status" value="1"/>
</dbReference>
<dbReference type="Pfam" id="PF24836">
    <property type="entry name" value="NQRA_2nd"/>
    <property type="match status" value="1"/>
</dbReference>
<dbReference type="Pfam" id="PF05896">
    <property type="entry name" value="NQRA_N"/>
    <property type="match status" value="1"/>
</dbReference>
<dbReference type="Pfam" id="PF11973">
    <property type="entry name" value="NQRA_SLBB"/>
    <property type="match status" value="1"/>
</dbReference>
<organism>
    <name type="scientific">Vibrio parahaemolyticus serotype O3:K6 (strain RIMD 2210633)</name>
    <dbReference type="NCBI Taxonomy" id="223926"/>
    <lineage>
        <taxon>Bacteria</taxon>
        <taxon>Pseudomonadati</taxon>
        <taxon>Pseudomonadota</taxon>
        <taxon>Gammaproteobacteria</taxon>
        <taxon>Vibrionales</taxon>
        <taxon>Vibrionaceae</taxon>
        <taxon>Vibrio</taxon>
    </lineage>
</organism>
<keyword id="KW-0406">Ion transport</keyword>
<keyword id="KW-0520">NAD</keyword>
<keyword id="KW-0915">Sodium</keyword>
<keyword id="KW-0739">Sodium transport</keyword>
<keyword id="KW-1278">Translocase</keyword>
<keyword id="KW-0813">Transport</keyword>
<keyword id="KW-0830">Ubiquinone</keyword>
<evidence type="ECO:0000255" key="1">
    <source>
        <dbReference type="HAMAP-Rule" id="MF_00425"/>
    </source>
</evidence>
<gene>
    <name evidence="1" type="primary">nqrA</name>
    <name type="ordered locus">VP2351</name>
</gene>
<feature type="chain" id="PRO_0000214207" description="Na(+)-translocating NADH-quinone reductase subunit A">
    <location>
        <begin position="1"/>
        <end position="446"/>
    </location>
</feature>
<accession>Q87MA6</accession>